<gene>
    <name evidence="4" type="primary">LTP110-A</name>
    <name evidence="6" type="ordered locus">Os11g0115100</name>
    <name evidence="5" type="ordered locus">LOC_Os11g02350</name>
    <name evidence="8" type="ORF">OsJ_031413</name>
</gene>
<gene>
    <name evidence="4" type="primary">LTP110-B</name>
    <name evidence="7" type="ordered locus">Os12g0114800</name>
    <name evidence="5" type="ordered locus">LOC_Os12g02300</name>
</gene>
<dbReference type="EMBL" id="DP000010">
    <property type="protein sequence ID" value="ABA91213.1"/>
    <property type="molecule type" value="Genomic_DNA"/>
</dbReference>
<dbReference type="EMBL" id="DP000011">
    <property type="protein sequence ID" value="ABA96282.1"/>
    <property type="molecule type" value="Genomic_DNA"/>
</dbReference>
<dbReference type="EMBL" id="AP008217">
    <property type="protein sequence ID" value="BAF27426.1"/>
    <property type="molecule type" value="Genomic_DNA"/>
</dbReference>
<dbReference type="EMBL" id="AP008218">
    <property type="protein sequence ID" value="BAF29004.1"/>
    <property type="molecule type" value="Genomic_DNA"/>
</dbReference>
<dbReference type="EMBL" id="AP014967">
    <property type="protein sequence ID" value="BAT12404.1"/>
    <property type="molecule type" value="Genomic_DNA"/>
</dbReference>
<dbReference type="EMBL" id="AP014968">
    <property type="protein sequence ID" value="BAT15592.1"/>
    <property type="molecule type" value="Genomic_DNA"/>
</dbReference>
<dbReference type="EMBL" id="CM000148">
    <property type="protein sequence ID" value="EAZ17204.1"/>
    <property type="molecule type" value="Genomic_DNA"/>
</dbReference>
<dbReference type="EMBL" id="AK060340">
    <property type="protein sequence ID" value="BAG87416.1"/>
    <property type="molecule type" value="mRNA"/>
</dbReference>
<dbReference type="EMBL" id="AK072917">
    <property type="protein sequence ID" value="BAG93202.1"/>
    <property type="molecule type" value="mRNA"/>
</dbReference>
<dbReference type="EMBL" id="AK104005">
    <property type="protein sequence ID" value="BAG96368.1"/>
    <property type="molecule type" value="mRNA"/>
</dbReference>
<dbReference type="EMBL" id="AK119677">
    <property type="protein sequence ID" value="BAG99738.1"/>
    <property type="molecule type" value="mRNA"/>
</dbReference>
<dbReference type="RefSeq" id="XP_015615428.1">
    <property type="nucleotide sequence ID" value="XM_015759942.1"/>
</dbReference>
<dbReference type="RefSeq" id="XP_015618271.1">
    <property type="nucleotide sequence ID" value="XM_015762785.1"/>
</dbReference>
<dbReference type="SMR" id="Q2QYL3"/>
<dbReference type="FunCoup" id="Q2QYL3">
    <property type="interactions" value="211"/>
</dbReference>
<dbReference type="STRING" id="39947.Q2QYL3"/>
<dbReference type="Allergome" id="2788">
    <property type="allergen name" value="Ory s 14"/>
</dbReference>
<dbReference type="PaxDb" id="39947-Q2QYL3"/>
<dbReference type="EnsemblPlants" id="Os11t0115100-01">
    <property type="protein sequence ID" value="Os11t0115100-01"/>
    <property type="gene ID" value="Os11g0115100"/>
</dbReference>
<dbReference type="EnsemblPlants" id="Os12t0114800-01">
    <property type="protein sequence ID" value="Os12t0114800-01"/>
    <property type="gene ID" value="Os12g0114800"/>
</dbReference>
<dbReference type="Gramene" id="Os11t0115100-01">
    <property type="protein sequence ID" value="Os11t0115100-01"/>
    <property type="gene ID" value="Os11g0115100"/>
</dbReference>
<dbReference type="Gramene" id="Os12t0114800-01">
    <property type="protein sequence ID" value="Os12t0114800-01"/>
    <property type="gene ID" value="Os12g0114800"/>
</dbReference>
<dbReference type="KEGG" id="dosa:Os11g0115100"/>
<dbReference type="KEGG" id="dosa:Os12g0114800"/>
<dbReference type="eggNOG" id="ENOG502S4CI">
    <property type="taxonomic scope" value="Eukaryota"/>
</dbReference>
<dbReference type="HOGENOM" id="CLU_128423_0_0_1"/>
<dbReference type="InParanoid" id="Q2QYL3"/>
<dbReference type="OMA" id="CACLKSM"/>
<dbReference type="OrthoDB" id="1890443at2759"/>
<dbReference type="Proteomes" id="UP000000763">
    <property type="component" value="Chromosome 11"/>
</dbReference>
<dbReference type="Proteomes" id="UP000000763">
    <property type="component" value="Chromosome 12"/>
</dbReference>
<dbReference type="Proteomes" id="UP000007752">
    <property type="component" value="Chromosome 11"/>
</dbReference>
<dbReference type="Proteomes" id="UP000059680">
    <property type="component" value="Chromosome 11"/>
</dbReference>
<dbReference type="Proteomes" id="UP000059680">
    <property type="component" value="Chromosome 12"/>
</dbReference>
<dbReference type="GO" id="GO:0008289">
    <property type="term" value="F:lipid binding"/>
    <property type="evidence" value="ECO:0007669"/>
    <property type="project" value="UniProtKB-KW"/>
</dbReference>
<dbReference type="GO" id="GO:0006952">
    <property type="term" value="P:defense response"/>
    <property type="evidence" value="ECO:0007669"/>
    <property type="project" value="UniProtKB-KW"/>
</dbReference>
<dbReference type="GO" id="GO:0006869">
    <property type="term" value="P:lipid transport"/>
    <property type="evidence" value="ECO:0007669"/>
    <property type="project" value="InterPro"/>
</dbReference>
<dbReference type="CDD" id="cd01960">
    <property type="entry name" value="nsLTP1"/>
    <property type="match status" value="1"/>
</dbReference>
<dbReference type="Gene3D" id="1.10.110.10">
    <property type="entry name" value="Plant lipid-transfer and hydrophobic proteins"/>
    <property type="match status" value="1"/>
</dbReference>
<dbReference type="InterPro" id="IPR036312">
    <property type="entry name" value="Bifun_inhib/LTP/seed_sf"/>
</dbReference>
<dbReference type="InterPro" id="IPR016140">
    <property type="entry name" value="Bifunc_inhib/LTP/seed_store"/>
</dbReference>
<dbReference type="InterPro" id="IPR000528">
    <property type="entry name" value="Plant_nsLTP"/>
</dbReference>
<dbReference type="PANTHER" id="PTHR33076">
    <property type="entry name" value="NON-SPECIFIC LIPID-TRANSFER PROTEIN 2-RELATED"/>
    <property type="match status" value="1"/>
</dbReference>
<dbReference type="Pfam" id="PF00234">
    <property type="entry name" value="Tryp_alpha_amyl"/>
    <property type="match status" value="1"/>
</dbReference>
<dbReference type="PRINTS" id="PR00382">
    <property type="entry name" value="LIPIDTRNSFER"/>
</dbReference>
<dbReference type="SMART" id="SM00499">
    <property type="entry name" value="AAI"/>
    <property type="match status" value="1"/>
</dbReference>
<dbReference type="SUPFAM" id="SSF47699">
    <property type="entry name" value="Bifunctional inhibitor/lipid-transfer protein/seed storage 2S albumin"/>
    <property type="match status" value="1"/>
</dbReference>
<dbReference type="PROSITE" id="PS00597">
    <property type="entry name" value="PLANT_LTP"/>
    <property type="match status" value="1"/>
</dbReference>
<keyword id="KW-1015">Disulfide bond</keyword>
<keyword id="KW-0446">Lipid-binding</keyword>
<keyword id="KW-0611">Plant defense</keyword>
<keyword id="KW-1185">Reference proteome</keyword>
<keyword id="KW-0732">Signal</keyword>
<keyword id="KW-0813">Transport</keyword>
<accession>Q2QYL3</accession>
<accession>B7E4W9</accession>
<accession>Q42976</accession>
<accession>Q8GZV1</accession>
<evidence type="ECO:0000250" key="1"/>
<evidence type="ECO:0000255" key="2"/>
<evidence type="ECO:0000269" key="3">
    <source>
    </source>
</evidence>
<evidence type="ECO:0000303" key="4">
    <source>
    </source>
</evidence>
<evidence type="ECO:0000305" key="5"/>
<evidence type="ECO:0000312" key="6">
    <source>
        <dbReference type="EMBL" id="BAT12404.1"/>
    </source>
</evidence>
<evidence type="ECO:0000312" key="7">
    <source>
        <dbReference type="EMBL" id="BAT15592.1"/>
    </source>
</evidence>
<evidence type="ECO:0000312" key="8">
    <source>
        <dbReference type="EMBL" id="EAZ17204.1"/>
    </source>
</evidence>
<name>NLTP3_ORYSJ</name>
<comment type="function">
    <text evidence="3">Plant non-specific lipid-transfer proteins transfer phospholipids as well as galactolipids across membranes. May play a role in wax or cutin deposition in the cell walls of expanding epidermal cells and certain secretory tissues. May possess an antifungal activity and protect the plant against pathogens.</text>
</comment>
<comment type="similarity">
    <text evidence="5">Belongs to the plant LTP family.</text>
</comment>
<proteinExistence type="evidence at transcript level"/>
<sequence length="121" mass="12145">MAGARRTMALVALVAVVAAAVVAERASAAVSCGDVTSSIAPCLSYVMGRESSPSSSCCSGVRTLNGKASSSADRRTACSCLKNMASSFRNLNMGNAASIPSKCGVSVAFPISTSVDCSKIN</sequence>
<feature type="signal peptide" evidence="2">
    <location>
        <begin position="1"/>
        <end position="28"/>
    </location>
</feature>
<feature type="chain" id="PRO_0000018394" description="Non-specific lipid-transfer protein 3">
    <location>
        <begin position="29"/>
        <end position="121"/>
    </location>
</feature>
<feature type="disulfide bond" evidence="1">
    <location>
        <begin position="32"/>
        <end position="80"/>
    </location>
</feature>
<feature type="disulfide bond" evidence="1">
    <location>
        <begin position="42"/>
        <end position="57"/>
    </location>
</feature>
<feature type="disulfide bond" evidence="1">
    <location>
        <begin position="58"/>
        <end position="103"/>
    </location>
</feature>
<feature type="disulfide bond" evidence="1">
    <location>
        <begin position="78"/>
        <end position="117"/>
    </location>
</feature>
<reference key="1">
    <citation type="journal article" date="2005" name="BMC Biol.">
        <title>The sequence of rice chromosomes 11 and 12, rich in disease resistance genes and recent gene duplications.</title>
        <authorList>
            <consortium name="The rice chromosomes 11 and 12 sequencing consortia"/>
        </authorList>
    </citation>
    <scope>NUCLEOTIDE SEQUENCE [LARGE SCALE GENOMIC DNA]</scope>
    <source>
        <strain>cv. Nipponbare</strain>
    </source>
</reference>
<reference key="2">
    <citation type="journal article" date="2005" name="Nature">
        <title>The map-based sequence of the rice genome.</title>
        <authorList>
            <consortium name="International rice genome sequencing project (IRGSP)"/>
        </authorList>
    </citation>
    <scope>NUCLEOTIDE SEQUENCE [LARGE SCALE GENOMIC DNA]</scope>
    <source>
        <strain>cv. Nipponbare</strain>
    </source>
</reference>
<reference key="3">
    <citation type="journal article" date="2008" name="Nucleic Acids Res.">
        <title>The rice annotation project database (RAP-DB): 2008 update.</title>
        <authorList>
            <consortium name="The rice annotation project (RAP)"/>
        </authorList>
    </citation>
    <scope>GENOME REANNOTATION</scope>
    <source>
        <strain>cv. Nipponbare</strain>
    </source>
</reference>
<reference key="4">
    <citation type="journal article" date="2013" name="Rice">
        <title>Improvement of the Oryza sativa Nipponbare reference genome using next generation sequence and optical map data.</title>
        <authorList>
            <person name="Kawahara Y."/>
            <person name="de la Bastide M."/>
            <person name="Hamilton J.P."/>
            <person name="Kanamori H."/>
            <person name="McCombie W.R."/>
            <person name="Ouyang S."/>
            <person name="Schwartz D.C."/>
            <person name="Tanaka T."/>
            <person name="Wu J."/>
            <person name="Zhou S."/>
            <person name="Childs K.L."/>
            <person name="Davidson R.M."/>
            <person name="Lin H."/>
            <person name="Quesada-Ocampo L."/>
            <person name="Vaillancourt B."/>
            <person name="Sakai H."/>
            <person name="Lee S.S."/>
            <person name="Kim J."/>
            <person name="Numa H."/>
            <person name="Itoh T."/>
            <person name="Buell C.R."/>
            <person name="Matsumoto T."/>
        </authorList>
    </citation>
    <scope>GENOME REANNOTATION</scope>
    <source>
        <strain>cv. Nipponbare</strain>
    </source>
</reference>
<reference key="5">
    <citation type="journal article" date="2005" name="PLoS Biol.">
        <title>The genomes of Oryza sativa: a history of duplications.</title>
        <authorList>
            <person name="Yu J."/>
            <person name="Wang J."/>
            <person name="Lin W."/>
            <person name="Li S."/>
            <person name="Li H."/>
            <person name="Zhou J."/>
            <person name="Ni P."/>
            <person name="Dong W."/>
            <person name="Hu S."/>
            <person name="Zeng C."/>
            <person name="Zhang J."/>
            <person name="Zhang Y."/>
            <person name="Li R."/>
            <person name="Xu Z."/>
            <person name="Li S."/>
            <person name="Li X."/>
            <person name="Zheng H."/>
            <person name="Cong L."/>
            <person name="Lin L."/>
            <person name="Yin J."/>
            <person name="Geng J."/>
            <person name="Li G."/>
            <person name="Shi J."/>
            <person name="Liu J."/>
            <person name="Lv H."/>
            <person name="Li J."/>
            <person name="Wang J."/>
            <person name="Deng Y."/>
            <person name="Ran L."/>
            <person name="Shi X."/>
            <person name="Wang X."/>
            <person name="Wu Q."/>
            <person name="Li C."/>
            <person name="Ren X."/>
            <person name="Wang J."/>
            <person name="Wang X."/>
            <person name="Li D."/>
            <person name="Liu D."/>
            <person name="Zhang X."/>
            <person name="Ji Z."/>
            <person name="Zhao W."/>
            <person name="Sun Y."/>
            <person name="Zhang Z."/>
            <person name="Bao J."/>
            <person name="Han Y."/>
            <person name="Dong L."/>
            <person name="Ji J."/>
            <person name="Chen P."/>
            <person name="Wu S."/>
            <person name="Liu J."/>
            <person name="Xiao Y."/>
            <person name="Bu D."/>
            <person name="Tan J."/>
            <person name="Yang L."/>
            <person name="Ye C."/>
            <person name="Zhang J."/>
            <person name="Xu J."/>
            <person name="Zhou Y."/>
            <person name="Yu Y."/>
            <person name="Zhang B."/>
            <person name="Zhuang S."/>
            <person name="Wei H."/>
            <person name="Liu B."/>
            <person name="Lei M."/>
            <person name="Yu H."/>
            <person name="Li Y."/>
            <person name="Xu H."/>
            <person name="Wei S."/>
            <person name="He X."/>
            <person name="Fang L."/>
            <person name="Zhang Z."/>
            <person name="Zhang Y."/>
            <person name="Huang X."/>
            <person name="Su Z."/>
            <person name="Tong W."/>
            <person name="Li J."/>
            <person name="Tong Z."/>
            <person name="Li S."/>
            <person name="Ye J."/>
            <person name="Wang L."/>
            <person name="Fang L."/>
            <person name="Lei T."/>
            <person name="Chen C.-S."/>
            <person name="Chen H.-C."/>
            <person name="Xu Z."/>
            <person name="Li H."/>
            <person name="Huang H."/>
            <person name="Zhang F."/>
            <person name="Xu H."/>
            <person name="Li N."/>
            <person name="Zhao C."/>
            <person name="Li S."/>
            <person name="Dong L."/>
            <person name="Huang Y."/>
            <person name="Li L."/>
            <person name="Xi Y."/>
            <person name="Qi Q."/>
            <person name="Li W."/>
            <person name="Zhang B."/>
            <person name="Hu W."/>
            <person name="Zhang Y."/>
            <person name="Tian X."/>
            <person name="Jiao Y."/>
            <person name="Liang X."/>
            <person name="Jin J."/>
            <person name="Gao L."/>
            <person name="Zheng W."/>
            <person name="Hao B."/>
            <person name="Liu S.-M."/>
            <person name="Wang W."/>
            <person name="Yuan L."/>
            <person name="Cao M."/>
            <person name="McDermott J."/>
            <person name="Samudrala R."/>
            <person name="Wang J."/>
            <person name="Wong G.K.-S."/>
            <person name="Yang H."/>
        </authorList>
    </citation>
    <scope>NUCLEOTIDE SEQUENCE [LARGE SCALE GENOMIC DNA]</scope>
    <source>
        <strain>cv. Nipponbare</strain>
    </source>
</reference>
<reference key="6">
    <citation type="journal article" date="2003" name="Science">
        <title>Collection, mapping, and annotation of over 28,000 cDNA clones from japonica rice.</title>
        <authorList>
            <consortium name="The rice full-length cDNA consortium"/>
        </authorList>
    </citation>
    <scope>NUCLEOTIDE SEQUENCE [LARGE SCALE MRNA]</scope>
    <source>
        <strain>cv. Nipponbare</strain>
    </source>
</reference>
<reference key="7">
    <citation type="journal article" date="2003" name="J. Biochem. Mol. Biol.">
        <title>Resistance function of rice lipid transfer protein LTP110.</title>
        <authorList>
            <person name="Ge X."/>
            <person name="Chen J."/>
            <person name="Li N."/>
            <person name="Lin Y."/>
            <person name="Sun C."/>
            <person name="Cao K."/>
        </authorList>
    </citation>
    <scope>FUNCTION</scope>
</reference>
<organism>
    <name type="scientific">Oryza sativa subsp. japonica</name>
    <name type="common">Rice</name>
    <dbReference type="NCBI Taxonomy" id="39947"/>
    <lineage>
        <taxon>Eukaryota</taxon>
        <taxon>Viridiplantae</taxon>
        <taxon>Streptophyta</taxon>
        <taxon>Embryophyta</taxon>
        <taxon>Tracheophyta</taxon>
        <taxon>Spermatophyta</taxon>
        <taxon>Magnoliopsida</taxon>
        <taxon>Liliopsida</taxon>
        <taxon>Poales</taxon>
        <taxon>Poaceae</taxon>
        <taxon>BOP clade</taxon>
        <taxon>Oryzoideae</taxon>
        <taxon>Oryzeae</taxon>
        <taxon>Oryzinae</taxon>
        <taxon>Oryza</taxon>
        <taxon>Oryza sativa</taxon>
    </lineage>
</organism>
<protein>
    <recommendedName>
        <fullName evidence="5">Non-specific lipid-transfer protein 3</fullName>
        <shortName evidence="5">LTP 3</shortName>
    </recommendedName>
</protein>